<organism>
    <name type="scientific">Bartonella henselae (strain ATCC 49882 / DSM 28221 / CCUG 30454 / Houston 1)</name>
    <name type="common">Rochalimaea henselae</name>
    <dbReference type="NCBI Taxonomy" id="283166"/>
    <lineage>
        <taxon>Bacteria</taxon>
        <taxon>Pseudomonadati</taxon>
        <taxon>Pseudomonadota</taxon>
        <taxon>Alphaproteobacteria</taxon>
        <taxon>Hyphomicrobiales</taxon>
        <taxon>Bartonellaceae</taxon>
        <taxon>Bartonella</taxon>
    </lineage>
</organism>
<comment type="function">
    <text evidence="1">NDH-1 shuttles electrons from NADH, via FMN and iron-sulfur (Fe-S) centers, to quinones in the respiratory chain. The immediate electron acceptor for the enzyme in this species is believed to be ubiquinone. Couples the redox reaction to proton translocation (for every two electrons transferred, four hydrogen ions are translocated across the cytoplasmic membrane), and thus conserves the redox energy in a proton gradient.</text>
</comment>
<comment type="catalytic activity">
    <reaction evidence="1">
        <text>a quinone + NADH + 5 H(+)(in) = a quinol + NAD(+) + 4 H(+)(out)</text>
        <dbReference type="Rhea" id="RHEA:57888"/>
        <dbReference type="ChEBI" id="CHEBI:15378"/>
        <dbReference type="ChEBI" id="CHEBI:24646"/>
        <dbReference type="ChEBI" id="CHEBI:57540"/>
        <dbReference type="ChEBI" id="CHEBI:57945"/>
        <dbReference type="ChEBI" id="CHEBI:132124"/>
    </reaction>
</comment>
<comment type="cofactor">
    <cofactor evidence="1">
        <name>[4Fe-4S] cluster</name>
        <dbReference type="ChEBI" id="CHEBI:49883"/>
    </cofactor>
    <text evidence="1">Binds 1 [4Fe-4S] cluster.</text>
</comment>
<comment type="subunit">
    <text evidence="1">NDH-1 is composed of 14 different subunits. Subunits NuoB, C, D, E, F, and G constitute the peripheral sector of the complex.</text>
</comment>
<comment type="subcellular location">
    <subcellularLocation>
        <location evidence="1">Cell inner membrane</location>
        <topology evidence="1">Peripheral membrane protein</topology>
        <orientation evidence="1">Cytoplasmic side</orientation>
    </subcellularLocation>
</comment>
<comment type="similarity">
    <text evidence="1">Belongs to the complex I 20 kDa subunit family.</text>
</comment>
<keyword id="KW-0004">4Fe-4S</keyword>
<keyword id="KW-0997">Cell inner membrane</keyword>
<keyword id="KW-1003">Cell membrane</keyword>
<keyword id="KW-0408">Iron</keyword>
<keyword id="KW-0411">Iron-sulfur</keyword>
<keyword id="KW-0472">Membrane</keyword>
<keyword id="KW-0479">Metal-binding</keyword>
<keyword id="KW-0520">NAD</keyword>
<keyword id="KW-0874">Quinone</keyword>
<keyword id="KW-1278">Translocase</keyword>
<keyword id="KW-0813">Transport</keyword>
<keyword id="KW-0830">Ubiquinone</keyword>
<sequence length="193" mass="21170">MGLISSNSTITAPKSKGIIDPNTGELIGSDDRFFCEVNAELSEKGFLVTSADALITWARTGSLMWMSFGLACCAIEMMQCSMPHYDNERFGYAPRASPRQSDVMVVAGTLTNKMAPALRKVYDQMPEPRYVISMGSCANGGGYYHYSYSVVRGCDRIVPVDIYVPGCPPTAEALLYGILLLQKKIRRTGSIER</sequence>
<gene>
    <name evidence="1" type="primary">nuoB</name>
    <name type="ordered locus">BH08940</name>
</gene>
<feature type="chain" id="PRO_0000376145" description="NADH-quinone oxidoreductase subunit B">
    <location>
        <begin position="1"/>
        <end position="193"/>
    </location>
</feature>
<feature type="binding site" evidence="1">
    <location>
        <position position="72"/>
    </location>
    <ligand>
        <name>[4Fe-4S] cluster</name>
        <dbReference type="ChEBI" id="CHEBI:49883"/>
    </ligand>
</feature>
<feature type="binding site" evidence="1">
    <location>
        <position position="73"/>
    </location>
    <ligand>
        <name>[4Fe-4S] cluster</name>
        <dbReference type="ChEBI" id="CHEBI:49883"/>
    </ligand>
</feature>
<feature type="binding site" evidence="1">
    <location>
        <position position="137"/>
    </location>
    <ligand>
        <name>[4Fe-4S] cluster</name>
        <dbReference type="ChEBI" id="CHEBI:49883"/>
    </ligand>
</feature>
<feature type="binding site" evidence="1">
    <location>
        <position position="167"/>
    </location>
    <ligand>
        <name>[4Fe-4S] cluster</name>
        <dbReference type="ChEBI" id="CHEBI:49883"/>
    </ligand>
</feature>
<reference key="1">
    <citation type="journal article" date="2004" name="Proc. Natl. Acad. Sci. U.S.A.">
        <title>The louse-borne human pathogen Bartonella quintana is a genomic derivative of the zoonotic agent Bartonella henselae.</title>
        <authorList>
            <person name="Alsmark U.C.M."/>
            <person name="Frank A.C."/>
            <person name="Karlberg E.O."/>
            <person name="Legault B.-A."/>
            <person name="Ardell D.H."/>
            <person name="Canbaeck B."/>
            <person name="Eriksson A.-S."/>
            <person name="Naeslund A.K."/>
            <person name="Handley S.A."/>
            <person name="Huvet M."/>
            <person name="La Scola B."/>
            <person name="Holmberg M."/>
            <person name="Andersson S.G.E."/>
        </authorList>
    </citation>
    <scope>NUCLEOTIDE SEQUENCE [LARGE SCALE GENOMIC DNA]</scope>
    <source>
        <strain>ATCC 49882 / DSM 28221 / CCUG 30454 / Houston 1</strain>
    </source>
</reference>
<protein>
    <recommendedName>
        <fullName evidence="1">NADH-quinone oxidoreductase subunit B</fullName>
        <ecNumber evidence="1">7.1.1.-</ecNumber>
    </recommendedName>
    <alternativeName>
        <fullName evidence="1">NADH dehydrogenase I subunit B</fullName>
    </alternativeName>
    <alternativeName>
        <fullName evidence="1">NDH-1 subunit B</fullName>
    </alternativeName>
</protein>
<dbReference type="EC" id="7.1.1.-" evidence="1"/>
<dbReference type="EMBL" id="BX897699">
    <property type="protein sequence ID" value="CAF27692.1"/>
    <property type="molecule type" value="Genomic_DNA"/>
</dbReference>
<dbReference type="RefSeq" id="WP_011180787.1">
    <property type="nucleotide sequence ID" value="NZ_LRIJ02000001.1"/>
</dbReference>
<dbReference type="SMR" id="Q6G389"/>
<dbReference type="PaxDb" id="283166-BH08940"/>
<dbReference type="EnsemblBacteria" id="CAF27692">
    <property type="protein sequence ID" value="CAF27692"/>
    <property type="gene ID" value="BH08940"/>
</dbReference>
<dbReference type="KEGG" id="bhe:BH08940"/>
<dbReference type="eggNOG" id="COG0377">
    <property type="taxonomic scope" value="Bacteria"/>
</dbReference>
<dbReference type="OrthoDB" id="9786737at2"/>
<dbReference type="Proteomes" id="UP000000421">
    <property type="component" value="Chromosome"/>
</dbReference>
<dbReference type="GO" id="GO:0005886">
    <property type="term" value="C:plasma membrane"/>
    <property type="evidence" value="ECO:0007669"/>
    <property type="project" value="UniProtKB-SubCell"/>
</dbReference>
<dbReference type="GO" id="GO:0045271">
    <property type="term" value="C:respiratory chain complex I"/>
    <property type="evidence" value="ECO:0007669"/>
    <property type="project" value="TreeGrafter"/>
</dbReference>
<dbReference type="GO" id="GO:0051539">
    <property type="term" value="F:4 iron, 4 sulfur cluster binding"/>
    <property type="evidence" value="ECO:0007669"/>
    <property type="project" value="UniProtKB-KW"/>
</dbReference>
<dbReference type="GO" id="GO:0005506">
    <property type="term" value="F:iron ion binding"/>
    <property type="evidence" value="ECO:0007669"/>
    <property type="project" value="UniProtKB-UniRule"/>
</dbReference>
<dbReference type="GO" id="GO:0008137">
    <property type="term" value="F:NADH dehydrogenase (ubiquinone) activity"/>
    <property type="evidence" value="ECO:0007669"/>
    <property type="project" value="InterPro"/>
</dbReference>
<dbReference type="GO" id="GO:0050136">
    <property type="term" value="F:NADH:ubiquinone reductase (non-electrogenic) activity"/>
    <property type="evidence" value="ECO:0007669"/>
    <property type="project" value="UniProtKB-UniRule"/>
</dbReference>
<dbReference type="GO" id="GO:0048038">
    <property type="term" value="F:quinone binding"/>
    <property type="evidence" value="ECO:0007669"/>
    <property type="project" value="UniProtKB-KW"/>
</dbReference>
<dbReference type="GO" id="GO:0009060">
    <property type="term" value="P:aerobic respiration"/>
    <property type="evidence" value="ECO:0007669"/>
    <property type="project" value="TreeGrafter"/>
</dbReference>
<dbReference type="GO" id="GO:0015990">
    <property type="term" value="P:electron transport coupled proton transport"/>
    <property type="evidence" value="ECO:0007669"/>
    <property type="project" value="TreeGrafter"/>
</dbReference>
<dbReference type="FunFam" id="3.40.50.12280:FF:000001">
    <property type="entry name" value="NADH-quinone oxidoreductase subunit B 2"/>
    <property type="match status" value="1"/>
</dbReference>
<dbReference type="Gene3D" id="3.40.50.12280">
    <property type="match status" value="1"/>
</dbReference>
<dbReference type="HAMAP" id="MF_01356">
    <property type="entry name" value="NDH1_NuoB"/>
    <property type="match status" value="1"/>
</dbReference>
<dbReference type="InterPro" id="IPR006137">
    <property type="entry name" value="NADH_UbQ_OxRdtase-like_20kDa"/>
</dbReference>
<dbReference type="InterPro" id="IPR006138">
    <property type="entry name" value="NADH_UQ_OxRdtase_20Kd_su"/>
</dbReference>
<dbReference type="NCBIfam" id="TIGR01957">
    <property type="entry name" value="nuoB_fam"/>
    <property type="match status" value="1"/>
</dbReference>
<dbReference type="NCBIfam" id="NF005012">
    <property type="entry name" value="PRK06411.1"/>
    <property type="match status" value="1"/>
</dbReference>
<dbReference type="PANTHER" id="PTHR11995">
    <property type="entry name" value="NADH DEHYDROGENASE"/>
    <property type="match status" value="1"/>
</dbReference>
<dbReference type="PANTHER" id="PTHR11995:SF14">
    <property type="entry name" value="NADH DEHYDROGENASE [UBIQUINONE] IRON-SULFUR PROTEIN 7, MITOCHONDRIAL"/>
    <property type="match status" value="1"/>
</dbReference>
<dbReference type="Pfam" id="PF01058">
    <property type="entry name" value="Oxidored_q6"/>
    <property type="match status" value="1"/>
</dbReference>
<dbReference type="SUPFAM" id="SSF56770">
    <property type="entry name" value="HydA/Nqo6-like"/>
    <property type="match status" value="1"/>
</dbReference>
<dbReference type="PROSITE" id="PS01150">
    <property type="entry name" value="COMPLEX1_20K"/>
    <property type="match status" value="1"/>
</dbReference>
<name>NUOB_BARHE</name>
<accession>Q6G389</accession>
<proteinExistence type="inferred from homology"/>
<evidence type="ECO:0000255" key="1">
    <source>
        <dbReference type="HAMAP-Rule" id="MF_01356"/>
    </source>
</evidence>